<sequence length="202" mass="22232">MMIIVMLLLSYLIGAFPSGFVIGKLFFKKDIRQFGSGNTGATNSFRVLGRPAGFLVTFLDIFKGFITVFFPLWLPVHADGPISTFFTNGLIVGLFAILGHVYPVYLKFQGGKAVATSAGVVLGVNPILLLILAIIFFIVLKIFKYVSLASIVAAICCVIGSLIIQDYILLVVSFLVSIILIIRHRSNIARIFRGEEPKIKWM</sequence>
<name>PLSY_STAAS</name>
<gene>
    <name evidence="1" type="primary">plsY</name>
    <name type="ordered locus">SAS1293</name>
</gene>
<proteinExistence type="inferred from homology"/>
<accession>Q6G9K6</accession>
<keyword id="KW-1003">Cell membrane</keyword>
<keyword id="KW-0444">Lipid biosynthesis</keyword>
<keyword id="KW-0443">Lipid metabolism</keyword>
<keyword id="KW-0472">Membrane</keyword>
<keyword id="KW-0594">Phospholipid biosynthesis</keyword>
<keyword id="KW-1208">Phospholipid metabolism</keyword>
<keyword id="KW-0808">Transferase</keyword>
<keyword id="KW-0812">Transmembrane</keyword>
<keyword id="KW-1133">Transmembrane helix</keyword>
<feature type="chain" id="PRO_0000188451" description="Glycerol-3-phosphate acyltransferase">
    <location>
        <begin position="1"/>
        <end position="202"/>
    </location>
</feature>
<feature type="transmembrane region" description="Helical" evidence="1">
    <location>
        <begin position="2"/>
        <end position="22"/>
    </location>
</feature>
<feature type="transmembrane region" description="Helical" evidence="1">
    <location>
        <begin position="54"/>
        <end position="74"/>
    </location>
</feature>
<feature type="transmembrane region" description="Helical" evidence="1">
    <location>
        <begin position="85"/>
        <end position="105"/>
    </location>
</feature>
<feature type="transmembrane region" description="Helical" evidence="1">
    <location>
        <begin position="120"/>
        <end position="140"/>
    </location>
</feature>
<feature type="transmembrane region" description="Helical" evidence="1">
    <location>
        <begin position="141"/>
        <end position="161"/>
    </location>
</feature>
<feature type="transmembrane region" description="Helical" evidence="1">
    <location>
        <begin position="162"/>
        <end position="182"/>
    </location>
</feature>
<reference key="1">
    <citation type="journal article" date="2004" name="Proc. Natl. Acad. Sci. U.S.A.">
        <title>Complete genomes of two clinical Staphylococcus aureus strains: evidence for the rapid evolution of virulence and drug resistance.</title>
        <authorList>
            <person name="Holden M.T.G."/>
            <person name="Feil E.J."/>
            <person name="Lindsay J.A."/>
            <person name="Peacock S.J."/>
            <person name="Day N.P.J."/>
            <person name="Enright M.C."/>
            <person name="Foster T.J."/>
            <person name="Moore C.E."/>
            <person name="Hurst L."/>
            <person name="Atkin R."/>
            <person name="Barron A."/>
            <person name="Bason N."/>
            <person name="Bentley S.D."/>
            <person name="Chillingworth C."/>
            <person name="Chillingworth T."/>
            <person name="Churcher C."/>
            <person name="Clark L."/>
            <person name="Corton C."/>
            <person name="Cronin A."/>
            <person name="Doggett J."/>
            <person name="Dowd L."/>
            <person name="Feltwell T."/>
            <person name="Hance Z."/>
            <person name="Harris B."/>
            <person name="Hauser H."/>
            <person name="Holroyd S."/>
            <person name="Jagels K."/>
            <person name="James K.D."/>
            <person name="Lennard N."/>
            <person name="Line A."/>
            <person name="Mayes R."/>
            <person name="Moule S."/>
            <person name="Mungall K."/>
            <person name="Ormond D."/>
            <person name="Quail M.A."/>
            <person name="Rabbinowitsch E."/>
            <person name="Rutherford K.M."/>
            <person name="Sanders M."/>
            <person name="Sharp S."/>
            <person name="Simmonds M."/>
            <person name="Stevens K."/>
            <person name="Whitehead S."/>
            <person name="Barrell B.G."/>
            <person name="Spratt B.G."/>
            <person name="Parkhill J."/>
        </authorList>
    </citation>
    <scope>NUCLEOTIDE SEQUENCE [LARGE SCALE GENOMIC DNA]</scope>
    <source>
        <strain>MSSA476</strain>
    </source>
</reference>
<organism>
    <name type="scientific">Staphylococcus aureus (strain MSSA476)</name>
    <dbReference type="NCBI Taxonomy" id="282459"/>
    <lineage>
        <taxon>Bacteria</taxon>
        <taxon>Bacillati</taxon>
        <taxon>Bacillota</taxon>
        <taxon>Bacilli</taxon>
        <taxon>Bacillales</taxon>
        <taxon>Staphylococcaceae</taxon>
        <taxon>Staphylococcus</taxon>
    </lineage>
</organism>
<protein>
    <recommendedName>
        <fullName evidence="1">Glycerol-3-phosphate acyltransferase</fullName>
    </recommendedName>
    <alternativeName>
        <fullName evidence="1">Acyl-PO4 G3P acyltransferase</fullName>
    </alternativeName>
    <alternativeName>
        <fullName evidence="1">Acyl-phosphate--glycerol-3-phosphate acyltransferase</fullName>
    </alternativeName>
    <alternativeName>
        <fullName evidence="1">G3P acyltransferase</fullName>
        <shortName evidence="1">GPAT</shortName>
        <ecNumber evidence="1">2.3.1.275</ecNumber>
    </alternativeName>
    <alternativeName>
        <fullName evidence="1">Lysophosphatidic acid synthase</fullName>
        <shortName evidence="1">LPA synthase</shortName>
    </alternativeName>
</protein>
<dbReference type="EC" id="2.3.1.275" evidence="1"/>
<dbReference type="EMBL" id="BX571857">
    <property type="protein sequence ID" value="CAG43070.1"/>
    <property type="molecule type" value="Genomic_DNA"/>
</dbReference>
<dbReference type="RefSeq" id="WP_000972779.1">
    <property type="nucleotide sequence ID" value="NC_002953.3"/>
</dbReference>
<dbReference type="SMR" id="Q6G9K6"/>
<dbReference type="KEGG" id="sas:SAS1293"/>
<dbReference type="HOGENOM" id="CLU_081254_4_0_9"/>
<dbReference type="UniPathway" id="UPA00085"/>
<dbReference type="GO" id="GO:0005886">
    <property type="term" value="C:plasma membrane"/>
    <property type="evidence" value="ECO:0007669"/>
    <property type="project" value="UniProtKB-SubCell"/>
</dbReference>
<dbReference type="GO" id="GO:0043772">
    <property type="term" value="F:acyl-phosphate glycerol-3-phosphate acyltransferase activity"/>
    <property type="evidence" value="ECO:0007669"/>
    <property type="project" value="UniProtKB-UniRule"/>
</dbReference>
<dbReference type="GO" id="GO:0008654">
    <property type="term" value="P:phospholipid biosynthetic process"/>
    <property type="evidence" value="ECO:0007669"/>
    <property type="project" value="UniProtKB-UniRule"/>
</dbReference>
<dbReference type="HAMAP" id="MF_01043">
    <property type="entry name" value="PlsY"/>
    <property type="match status" value="1"/>
</dbReference>
<dbReference type="InterPro" id="IPR003811">
    <property type="entry name" value="G3P_acylTferase_PlsY"/>
</dbReference>
<dbReference type="NCBIfam" id="TIGR00023">
    <property type="entry name" value="glycerol-3-phosphate 1-O-acyltransferase PlsY"/>
    <property type="match status" value="1"/>
</dbReference>
<dbReference type="PANTHER" id="PTHR30309:SF0">
    <property type="entry name" value="GLYCEROL-3-PHOSPHATE ACYLTRANSFERASE-RELATED"/>
    <property type="match status" value="1"/>
</dbReference>
<dbReference type="PANTHER" id="PTHR30309">
    <property type="entry name" value="INNER MEMBRANE PROTEIN YGIH"/>
    <property type="match status" value="1"/>
</dbReference>
<dbReference type="Pfam" id="PF02660">
    <property type="entry name" value="G3P_acyltransf"/>
    <property type="match status" value="1"/>
</dbReference>
<dbReference type="SMART" id="SM01207">
    <property type="entry name" value="G3P_acyltransf"/>
    <property type="match status" value="1"/>
</dbReference>
<evidence type="ECO:0000255" key="1">
    <source>
        <dbReference type="HAMAP-Rule" id="MF_01043"/>
    </source>
</evidence>
<comment type="function">
    <text evidence="1">Catalyzes the transfer of an acyl group from acyl-phosphate (acyl-PO(4)) to glycerol-3-phosphate (G3P) to form lysophosphatidic acid (LPA). This enzyme utilizes acyl-phosphate as fatty acyl donor, but not acyl-CoA or acyl-ACP.</text>
</comment>
<comment type="catalytic activity">
    <reaction evidence="1">
        <text>an acyl phosphate + sn-glycerol 3-phosphate = a 1-acyl-sn-glycero-3-phosphate + phosphate</text>
        <dbReference type="Rhea" id="RHEA:34075"/>
        <dbReference type="ChEBI" id="CHEBI:43474"/>
        <dbReference type="ChEBI" id="CHEBI:57597"/>
        <dbReference type="ChEBI" id="CHEBI:57970"/>
        <dbReference type="ChEBI" id="CHEBI:59918"/>
        <dbReference type="EC" id="2.3.1.275"/>
    </reaction>
</comment>
<comment type="pathway">
    <text evidence="1">Lipid metabolism; phospholipid metabolism.</text>
</comment>
<comment type="subunit">
    <text evidence="1">Probably interacts with PlsX.</text>
</comment>
<comment type="subcellular location">
    <subcellularLocation>
        <location evidence="1">Cell membrane</location>
        <topology evidence="1">Multi-pass membrane protein</topology>
    </subcellularLocation>
</comment>
<comment type="similarity">
    <text evidence="1">Belongs to the PlsY family.</text>
</comment>